<feature type="chain" id="PRO_0000301365" description="Phosphoglucosamine mutase">
    <location>
        <begin position="1"/>
        <end position="450"/>
    </location>
</feature>
<feature type="active site" description="Phosphoserine intermediate" evidence="1">
    <location>
        <position position="102"/>
    </location>
</feature>
<feature type="binding site" description="via phosphate group" evidence="1">
    <location>
        <position position="102"/>
    </location>
    <ligand>
        <name>Mg(2+)</name>
        <dbReference type="ChEBI" id="CHEBI:18420"/>
    </ligand>
</feature>
<feature type="binding site" evidence="1">
    <location>
        <position position="243"/>
    </location>
    <ligand>
        <name>Mg(2+)</name>
        <dbReference type="ChEBI" id="CHEBI:18420"/>
    </ligand>
</feature>
<feature type="binding site" evidence="1">
    <location>
        <position position="245"/>
    </location>
    <ligand>
        <name>Mg(2+)</name>
        <dbReference type="ChEBI" id="CHEBI:18420"/>
    </ligand>
</feature>
<feature type="binding site" evidence="1">
    <location>
        <position position="247"/>
    </location>
    <ligand>
        <name>Mg(2+)</name>
        <dbReference type="ChEBI" id="CHEBI:18420"/>
    </ligand>
</feature>
<feature type="modified residue" description="Phosphoserine" evidence="1">
    <location>
        <position position="102"/>
    </location>
</feature>
<gene>
    <name evidence="1" type="primary">glmM</name>
    <name type="ordered locus">RL3964</name>
</gene>
<protein>
    <recommendedName>
        <fullName evidence="1">Phosphoglucosamine mutase</fullName>
        <ecNumber evidence="1">5.4.2.10</ecNumber>
    </recommendedName>
</protein>
<proteinExistence type="inferred from homology"/>
<accession>Q1MC77</accession>
<dbReference type="EC" id="5.4.2.10" evidence="1"/>
<dbReference type="EMBL" id="AM236080">
    <property type="protein sequence ID" value="CAK09454.1"/>
    <property type="molecule type" value="Genomic_DNA"/>
</dbReference>
<dbReference type="RefSeq" id="WP_011653397.1">
    <property type="nucleotide sequence ID" value="NC_008380.1"/>
</dbReference>
<dbReference type="SMR" id="Q1MC77"/>
<dbReference type="EnsemblBacteria" id="CAK09454">
    <property type="protein sequence ID" value="CAK09454"/>
    <property type="gene ID" value="RL3964"/>
</dbReference>
<dbReference type="KEGG" id="rle:RL3964"/>
<dbReference type="eggNOG" id="COG1109">
    <property type="taxonomic scope" value="Bacteria"/>
</dbReference>
<dbReference type="HOGENOM" id="CLU_016950_7_0_5"/>
<dbReference type="Proteomes" id="UP000006575">
    <property type="component" value="Chromosome"/>
</dbReference>
<dbReference type="GO" id="GO:0005829">
    <property type="term" value="C:cytosol"/>
    <property type="evidence" value="ECO:0007669"/>
    <property type="project" value="TreeGrafter"/>
</dbReference>
<dbReference type="GO" id="GO:0000287">
    <property type="term" value="F:magnesium ion binding"/>
    <property type="evidence" value="ECO:0007669"/>
    <property type="project" value="UniProtKB-UniRule"/>
</dbReference>
<dbReference type="GO" id="GO:0008966">
    <property type="term" value="F:phosphoglucosamine mutase activity"/>
    <property type="evidence" value="ECO:0007669"/>
    <property type="project" value="UniProtKB-UniRule"/>
</dbReference>
<dbReference type="GO" id="GO:0004615">
    <property type="term" value="F:phosphomannomutase activity"/>
    <property type="evidence" value="ECO:0007669"/>
    <property type="project" value="TreeGrafter"/>
</dbReference>
<dbReference type="GO" id="GO:0005975">
    <property type="term" value="P:carbohydrate metabolic process"/>
    <property type="evidence" value="ECO:0007669"/>
    <property type="project" value="InterPro"/>
</dbReference>
<dbReference type="GO" id="GO:0009252">
    <property type="term" value="P:peptidoglycan biosynthetic process"/>
    <property type="evidence" value="ECO:0007669"/>
    <property type="project" value="TreeGrafter"/>
</dbReference>
<dbReference type="GO" id="GO:0006048">
    <property type="term" value="P:UDP-N-acetylglucosamine biosynthetic process"/>
    <property type="evidence" value="ECO:0007669"/>
    <property type="project" value="TreeGrafter"/>
</dbReference>
<dbReference type="CDD" id="cd05802">
    <property type="entry name" value="GlmM"/>
    <property type="match status" value="1"/>
</dbReference>
<dbReference type="FunFam" id="3.30.310.50:FF:000001">
    <property type="entry name" value="Phosphoglucosamine mutase"/>
    <property type="match status" value="1"/>
</dbReference>
<dbReference type="FunFam" id="3.40.120.10:FF:000001">
    <property type="entry name" value="Phosphoglucosamine mutase"/>
    <property type="match status" value="1"/>
</dbReference>
<dbReference type="FunFam" id="3.40.120.10:FF:000002">
    <property type="entry name" value="Phosphoglucosamine mutase"/>
    <property type="match status" value="1"/>
</dbReference>
<dbReference type="Gene3D" id="3.40.120.10">
    <property type="entry name" value="Alpha-D-Glucose-1,6-Bisphosphate, subunit A, domain 3"/>
    <property type="match status" value="3"/>
</dbReference>
<dbReference type="Gene3D" id="3.30.310.50">
    <property type="entry name" value="Alpha-D-phosphohexomutase, C-terminal domain"/>
    <property type="match status" value="1"/>
</dbReference>
<dbReference type="HAMAP" id="MF_01554_B">
    <property type="entry name" value="GlmM_B"/>
    <property type="match status" value="1"/>
</dbReference>
<dbReference type="InterPro" id="IPR005844">
    <property type="entry name" value="A-D-PHexomutase_a/b/a-I"/>
</dbReference>
<dbReference type="InterPro" id="IPR016055">
    <property type="entry name" value="A-D-PHexomutase_a/b/a-I/II/III"/>
</dbReference>
<dbReference type="InterPro" id="IPR005845">
    <property type="entry name" value="A-D-PHexomutase_a/b/a-II"/>
</dbReference>
<dbReference type="InterPro" id="IPR005846">
    <property type="entry name" value="A-D-PHexomutase_a/b/a-III"/>
</dbReference>
<dbReference type="InterPro" id="IPR005843">
    <property type="entry name" value="A-D-PHexomutase_C"/>
</dbReference>
<dbReference type="InterPro" id="IPR036900">
    <property type="entry name" value="A-D-PHexomutase_C_sf"/>
</dbReference>
<dbReference type="InterPro" id="IPR016066">
    <property type="entry name" value="A-D-PHexomutase_CS"/>
</dbReference>
<dbReference type="InterPro" id="IPR005841">
    <property type="entry name" value="Alpha-D-phosphohexomutase_SF"/>
</dbReference>
<dbReference type="InterPro" id="IPR006352">
    <property type="entry name" value="GlmM_bact"/>
</dbReference>
<dbReference type="InterPro" id="IPR050060">
    <property type="entry name" value="Phosphoglucosamine_mutase"/>
</dbReference>
<dbReference type="NCBIfam" id="TIGR01455">
    <property type="entry name" value="glmM"/>
    <property type="match status" value="1"/>
</dbReference>
<dbReference type="NCBIfam" id="NF008139">
    <property type="entry name" value="PRK10887.1"/>
    <property type="match status" value="1"/>
</dbReference>
<dbReference type="PANTHER" id="PTHR42946:SF1">
    <property type="entry name" value="PHOSPHOGLUCOMUTASE (ALPHA-D-GLUCOSE-1,6-BISPHOSPHATE-DEPENDENT)"/>
    <property type="match status" value="1"/>
</dbReference>
<dbReference type="PANTHER" id="PTHR42946">
    <property type="entry name" value="PHOSPHOHEXOSE MUTASE"/>
    <property type="match status" value="1"/>
</dbReference>
<dbReference type="Pfam" id="PF02878">
    <property type="entry name" value="PGM_PMM_I"/>
    <property type="match status" value="1"/>
</dbReference>
<dbReference type="Pfam" id="PF02879">
    <property type="entry name" value="PGM_PMM_II"/>
    <property type="match status" value="1"/>
</dbReference>
<dbReference type="Pfam" id="PF02880">
    <property type="entry name" value="PGM_PMM_III"/>
    <property type="match status" value="1"/>
</dbReference>
<dbReference type="Pfam" id="PF00408">
    <property type="entry name" value="PGM_PMM_IV"/>
    <property type="match status" value="1"/>
</dbReference>
<dbReference type="PRINTS" id="PR00509">
    <property type="entry name" value="PGMPMM"/>
</dbReference>
<dbReference type="SUPFAM" id="SSF55957">
    <property type="entry name" value="Phosphoglucomutase, C-terminal domain"/>
    <property type="match status" value="1"/>
</dbReference>
<dbReference type="SUPFAM" id="SSF53738">
    <property type="entry name" value="Phosphoglucomutase, first 3 domains"/>
    <property type="match status" value="3"/>
</dbReference>
<dbReference type="PROSITE" id="PS00710">
    <property type="entry name" value="PGM_PMM"/>
    <property type="match status" value="1"/>
</dbReference>
<sequence length="450" mass="48669">MKRRYFGTDGIRGQSNVFPMTPDLAMRVGIAAGTIFRRGNHRHRVVIGKDTRLSGYMLENAMVAGFTAAGLDAFILGPIPTPAVAMLTRSLRADLGVMISASHNPYEDNGIKLFGPDGYKLSDDIEAEIEDLLERDLNAQLAKSDDIGRAKRVDGVHDRYIEHAKRTLPRDVTLQGLRIAIDCANGAAYKVAPAVLWELGAEVVTIGNEPNGTNINLNCGSTSPVALQKKVDEVRADIGIALDGDADRVIIVDENGSIVDGDQLMAVIAESWAESQQLRGNGIVATVMSNLGLERFLDDKGLGLARTKVGDRYVVEHMRQHNYNVGGEQSGHIVLSDYGTTGDGLVAALQILAAVKRTGRTVSEVCRRFEPVPQLLRNVRISGGKPLEDIQVQKAIADAEAELARNGRLVIRPSGTEPLIRVMAEGDDRAQIERIVNELIGTISNVRTAA</sequence>
<reference key="1">
    <citation type="journal article" date="2006" name="Genome Biol.">
        <title>The genome of Rhizobium leguminosarum has recognizable core and accessory components.</title>
        <authorList>
            <person name="Young J.P.W."/>
            <person name="Crossman L.C."/>
            <person name="Johnston A.W.B."/>
            <person name="Thomson N.R."/>
            <person name="Ghazoui Z.F."/>
            <person name="Hull K.H."/>
            <person name="Wexler M."/>
            <person name="Curson A.R.J."/>
            <person name="Todd J.D."/>
            <person name="Poole P.S."/>
            <person name="Mauchline T.H."/>
            <person name="East A.K."/>
            <person name="Quail M.A."/>
            <person name="Churcher C."/>
            <person name="Arrowsmith C."/>
            <person name="Cherevach I."/>
            <person name="Chillingworth T."/>
            <person name="Clarke K."/>
            <person name="Cronin A."/>
            <person name="Davis P."/>
            <person name="Fraser A."/>
            <person name="Hance Z."/>
            <person name="Hauser H."/>
            <person name="Jagels K."/>
            <person name="Moule S."/>
            <person name="Mungall K."/>
            <person name="Norbertczak H."/>
            <person name="Rabbinowitsch E."/>
            <person name="Sanders M."/>
            <person name="Simmonds M."/>
            <person name="Whitehead S."/>
            <person name="Parkhill J."/>
        </authorList>
    </citation>
    <scope>NUCLEOTIDE SEQUENCE [LARGE SCALE GENOMIC DNA]</scope>
    <source>
        <strain>DSM 114642 / LMG 32736 / 3841</strain>
    </source>
</reference>
<keyword id="KW-0413">Isomerase</keyword>
<keyword id="KW-0460">Magnesium</keyword>
<keyword id="KW-0479">Metal-binding</keyword>
<keyword id="KW-0597">Phosphoprotein</keyword>
<evidence type="ECO:0000255" key="1">
    <source>
        <dbReference type="HAMAP-Rule" id="MF_01554"/>
    </source>
</evidence>
<name>GLMM_RHIJ3</name>
<organism>
    <name type="scientific">Rhizobium johnstonii (strain DSM 114642 / LMG 32736 / 3841)</name>
    <name type="common">Rhizobium leguminosarum bv. viciae</name>
    <dbReference type="NCBI Taxonomy" id="216596"/>
    <lineage>
        <taxon>Bacteria</taxon>
        <taxon>Pseudomonadati</taxon>
        <taxon>Pseudomonadota</taxon>
        <taxon>Alphaproteobacteria</taxon>
        <taxon>Hyphomicrobiales</taxon>
        <taxon>Rhizobiaceae</taxon>
        <taxon>Rhizobium/Agrobacterium group</taxon>
        <taxon>Rhizobium</taxon>
        <taxon>Rhizobium johnstonii</taxon>
    </lineage>
</organism>
<comment type="function">
    <text evidence="1">Catalyzes the conversion of glucosamine-6-phosphate to glucosamine-1-phosphate.</text>
</comment>
<comment type="catalytic activity">
    <reaction evidence="1">
        <text>alpha-D-glucosamine 1-phosphate = D-glucosamine 6-phosphate</text>
        <dbReference type="Rhea" id="RHEA:23424"/>
        <dbReference type="ChEBI" id="CHEBI:58516"/>
        <dbReference type="ChEBI" id="CHEBI:58725"/>
        <dbReference type="EC" id="5.4.2.10"/>
    </reaction>
</comment>
<comment type="cofactor">
    <cofactor evidence="1">
        <name>Mg(2+)</name>
        <dbReference type="ChEBI" id="CHEBI:18420"/>
    </cofactor>
    <text evidence="1">Binds 1 Mg(2+) ion per subunit.</text>
</comment>
<comment type="PTM">
    <text evidence="1">Activated by phosphorylation.</text>
</comment>
<comment type="similarity">
    <text evidence="1">Belongs to the phosphohexose mutase family.</text>
</comment>